<reference key="1">
    <citation type="journal article" date="2009" name="PLoS Genet.">
        <title>Organised genome dynamics in the Escherichia coli species results in highly diverse adaptive paths.</title>
        <authorList>
            <person name="Touchon M."/>
            <person name="Hoede C."/>
            <person name="Tenaillon O."/>
            <person name="Barbe V."/>
            <person name="Baeriswyl S."/>
            <person name="Bidet P."/>
            <person name="Bingen E."/>
            <person name="Bonacorsi S."/>
            <person name="Bouchier C."/>
            <person name="Bouvet O."/>
            <person name="Calteau A."/>
            <person name="Chiapello H."/>
            <person name="Clermont O."/>
            <person name="Cruveiller S."/>
            <person name="Danchin A."/>
            <person name="Diard M."/>
            <person name="Dossat C."/>
            <person name="Karoui M.E."/>
            <person name="Frapy E."/>
            <person name="Garry L."/>
            <person name="Ghigo J.M."/>
            <person name="Gilles A.M."/>
            <person name="Johnson J."/>
            <person name="Le Bouguenec C."/>
            <person name="Lescat M."/>
            <person name="Mangenot S."/>
            <person name="Martinez-Jehanne V."/>
            <person name="Matic I."/>
            <person name="Nassif X."/>
            <person name="Oztas S."/>
            <person name="Petit M.A."/>
            <person name="Pichon C."/>
            <person name="Rouy Z."/>
            <person name="Ruf C.S."/>
            <person name="Schneider D."/>
            <person name="Tourret J."/>
            <person name="Vacherie B."/>
            <person name="Vallenet D."/>
            <person name="Medigue C."/>
            <person name="Rocha E.P.C."/>
            <person name="Denamur E."/>
        </authorList>
    </citation>
    <scope>NUCLEOTIDE SEQUENCE [LARGE SCALE GENOMIC DNA]</scope>
    <source>
        <strain>S88 / ExPEC</strain>
    </source>
</reference>
<comment type="function">
    <text evidence="1">Involved in the binding of tRNA to the ribosomes.</text>
</comment>
<comment type="subunit">
    <text evidence="1">Part of the 30S ribosomal subunit.</text>
</comment>
<comment type="similarity">
    <text evidence="1">Belongs to the universal ribosomal protein uS10 family.</text>
</comment>
<name>RS10_ECO45</name>
<proteinExistence type="inferred from homology"/>
<feature type="chain" id="PRO_1000127116" description="Small ribosomal subunit protein uS10">
    <location>
        <begin position="1"/>
        <end position="103"/>
    </location>
</feature>
<keyword id="KW-1185">Reference proteome</keyword>
<keyword id="KW-0687">Ribonucleoprotein</keyword>
<keyword id="KW-0689">Ribosomal protein</keyword>
<dbReference type="EMBL" id="CU928161">
    <property type="protein sequence ID" value="CAR04925.1"/>
    <property type="molecule type" value="Genomic_DNA"/>
</dbReference>
<dbReference type="RefSeq" id="WP_001181004.1">
    <property type="nucleotide sequence ID" value="NC_011742.1"/>
</dbReference>
<dbReference type="EMDB" id="EMD-7014"/>
<dbReference type="EMDB" id="EMD-7015"/>
<dbReference type="EMDB" id="EMD-7016"/>
<dbReference type="EMDB" id="EMD-7970"/>
<dbReference type="EMDB" id="EMD-8621"/>
<dbReference type="EMDB" id="EMD-8826"/>
<dbReference type="EMDB" id="EMD-8829"/>
<dbReference type="SMR" id="B7MCT6"/>
<dbReference type="IntAct" id="B7MCT6">
    <property type="interactions" value="1"/>
</dbReference>
<dbReference type="GeneID" id="93778666"/>
<dbReference type="KEGG" id="ecz:ECS88_3708"/>
<dbReference type="HOGENOM" id="CLU_122625_1_3_6"/>
<dbReference type="Proteomes" id="UP000000747">
    <property type="component" value="Chromosome"/>
</dbReference>
<dbReference type="GO" id="GO:1990904">
    <property type="term" value="C:ribonucleoprotein complex"/>
    <property type="evidence" value="ECO:0007669"/>
    <property type="project" value="UniProtKB-KW"/>
</dbReference>
<dbReference type="GO" id="GO:0005840">
    <property type="term" value="C:ribosome"/>
    <property type="evidence" value="ECO:0007669"/>
    <property type="project" value="UniProtKB-KW"/>
</dbReference>
<dbReference type="GO" id="GO:0003735">
    <property type="term" value="F:structural constituent of ribosome"/>
    <property type="evidence" value="ECO:0007669"/>
    <property type="project" value="InterPro"/>
</dbReference>
<dbReference type="GO" id="GO:0000049">
    <property type="term" value="F:tRNA binding"/>
    <property type="evidence" value="ECO:0007669"/>
    <property type="project" value="UniProtKB-UniRule"/>
</dbReference>
<dbReference type="GO" id="GO:0006412">
    <property type="term" value="P:translation"/>
    <property type="evidence" value="ECO:0007669"/>
    <property type="project" value="UniProtKB-UniRule"/>
</dbReference>
<dbReference type="FunFam" id="3.30.70.600:FF:000001">
    <property type="entry name" value="30S ribosomal protein S10"/>
    <property type="match status" value="1"/>
</dbReference>
<dbReference type="Gene3D" id="3.30.70.600">
    <property type="entry name" value="Ribosomal protein S10 domain"/>
    <property type="match status" value="1"/>
</dbReference>
<dbReference type="HAMAP" id="MF_00508">
    <property type="entry name" value="Ribosomal_uS10"/>
    <property type="match status" value="1"/>
</dbReference>
<dbReference type="InterPro" id="IPR001848">
    <property type="entry name" value="Ribosomal_uS10"/>
</dbReference>
<dbReference type="InterPro" id="IPR018268">
    <property type="entry name" value="Ribosomal_uS10_CS"/>
</dbReference>
<dbReference type="InterPro" id="IPR027486">
    <property type="entry name" value="Ribosomal_uS10_dom"/>
</dbReference>
<dbReference type="InterPro" id="IPR036838">
    <property type="entry name" value="Ribosomal_uS10_dom_sf"/>
</dbReference>
<dbReference type="NCBIfam" id="NF001861">
    <property type="entry name" value="PRK00596.1"/>
    <property type="match status" value="1"/>
</dbReference>
<dbReference type="NCBIfam" id="TIGR01049">
    <property type="entry name" value="rpsJ_bact"/>
    <property type="match status" value="1"/>
</dbReference>
<dbReference type="PANTHER" id="PTHR11700">
    <property type="entry name" value="30S RIBOSOMAL PROTEIN S10 FAMILY MEMBER"/>
    <property type="match status" value="1"/>
</dbReference>
<dbReference type="Pfam" id="PF00338">
    <property type="entry name" value="Ribosomal_S10"/>
    <property type="match status" value="1"/>
</dbReference>
<dbReference type="PRINTS" id="PR00971">
    <property type="entry name" value="RIBOSOMALS10"/>
</dbReference>
<dbReference type="SMART" id="SM01403">
    <property type="entry name" value="Ribosomal_S10"/>
    <property type="match status" value="1"/>
</dbReference>
<dbReference type="SUPFAM" id="SSF54999">
    <property type="entry name" value="Ribosomal protein S10"/>
    <property type="match status" value="1"/>
</dbReference>
<dbReference type="PROSITE" id="PS00361">
    <property type="entry name" value="RIBOSOMAL_S10"/>
    <property type="match status" value="1"/>
</dbReference>
<evidence type="ECO:0000255" key="1">
    <source>
        <dbReference type="HAMAP-Rule" id="MF_00508"/>
    </source>
</evidence>
<evidence type="ECO:0000305" key="2"/>
<gene>
    <name evidence="1" type="primary">rpsJ</name>
    <name type="ordered locus">ECS88_3708</name>
</gene>
<sequence>MQNQRIRIRLKAFDHRLIDQATAEIVETAKRTGAQVRGPIPLPTRKERFTVLISPHVNKDARDQYEIRTHLRLVDIVEPTEKTVDALMRLDLAAGVDVQISLG</sequence>
<accession>B7MCT6</accession>
<protein>
    <recommendedName>
        <fullName evidence="1">Small ribosomal subunit protein uS10</fullName>
    </recommendedName>
    <alternativeName>
        <fullName evidence="2">30S ribosomal protein S10</fullName>
    </alternativeName>
</protein>
<organism>
    <name type="scientific">Escherichia coli O45:K1 (strain S88 / ExPEC)</name>
    <dbReference type="NCBI Taxonomy" id="585035"/>
    <lineage>
        <taxon>Bacteria</taxon>
        <taxon>Pseudomonadati</taxon>
        <taxon>Pseudomonadota</taxon>
        <taxon>Gammaproteobacteria</taxon>
        <taxon>Enterobacterales</taxon>
        <taxon>Enterobacteriaceae</taxon>
        <taxon>Escherichia</taxon>
    </lineage>
</organism>